<dbReference type="EC" id="3.1.3.-" evidence="2 3 8 11 14 4 9 12"/>
<dbReference type="EC" id="3.6.1.-" evidence="4 9 12"/>
<dbReference type="EMBL" id="M58708">
    <property type="protein sequence ID" value="AAA72086.1"/>
    <property type="molecule type" value="Genomic_DNA"/>
</dbReference>
<dbReference type="EMBL" id="U00096">
    <property type="protein sequence ID" value="AAC74065.1"/>
    <property type="molecule type" value="Genomic_DNA"/>
</dbReference>
<dbReference type="EMBL" id="AP009048">
    <property type="protein sequence ID" value="BAA35745.1"/>
    <property type="molecule type" value="Genomic_DNA"/>
</dbReference>
<dbReference type="EMBL" id="X05471">
    <property type="protein sequence ID" value="CAA29031.1"/>
    <property type="molecule type" value="Genomic_DNA"/>
</dbReference>
<dbReference type="EMBL" id="S63811">
    <property type="protein sequence ID" value="AAB20286.1"/>
    <property type="molecule type" value="Genomic_DNA"/>
</dbReference>
<dbReference type="PIR" id="B36733">
    <property type="entry name" value="B36733"/>
</dbReference>
<dbReference type="RefSeq" id="NP_415500.1">
    <property type="nucleotide sequence ID" value="NC_000913.3"/>
</dbReference>
<dbReference type="RefSeq" id="WP_001300464.1">
    <property type="nucleotide sequence ID" value="NZ_SSZK01000002.1"/>
</dbReference>
<dbReference type="PDB" id="1DKL">
    <property type="method" value="X-ray"/>
    <property type="resolution" value="2.30 A"/>
    <property type="chains" value="A/B=23-432"/>
</dbReference>
<dbReference type="PDB" id="1DKM">
    <property type="method" value="X-ray"/>
    <property type="resolution" value="2.25 A"/>
    <property type="chains" value="A=23-432"/>
</dbReference>
<dbReference type="PDB" id="1DKN">
    <property type="method" value="X-ray"/>
    <property type="resolution" value="2.40 A"/>
    <property type="chains" value="A=23-432"/>
</dbReference>
<dbReference type="PDB" id="1DKO">
    <property type="method" value="X-ray"/>
    <property type="resolution" value="2.38 A"/>
    <property type="chains" value="A=23-432"/>
</dbReference>
<dbReference type="PDB" id="1DKP">
    <property type="method" value="X-ray"/>
    <property type="resolution" value="2.28 A"/>
    <property type="chains" value="A=23-432"/>
</dbReference>
<dbReference type="PDB" id="1DKQ">
    <property type="method" value="X-ray"/>
    <property type="resolution" value="2.05 A"/>
    <property type="chains" value="A=23-432"/>
</dbReference>
<dbReference type="PDB" id="4TSR">
    <property type="method" value="X-ray"/>
    <property type="resolution" value="2.07 A"/>
    <property type="chains" value="A=23-432"/>
</dbReference>
<dbReference type="PDB" id="7Z1J">
    <property type="method" value="X-ray"/>
    <property type="resolution" value="1.85 A"/>
    <property type="chains" value="A=23-432"/>
</dbReference>
<dbReference type="PDB" id="7Z2S">
    <property type="method" value="X-ray"/>
    <property type="resolution" value="1.72 A"/>
    <property type="chains" value="A=23-432"/>
</dbReference>
<dbReference type="PDB" id="7Z2T">
    <property type="method" value="X-ray"/>
    <property type="resolution" value="1.41 A"/>
    <property type="chains" value="A=23-432"/>
</dbReference>
<dbReference type="PDB" id="7Z2W">
    <property type="method" value="X-ray"/>
    <property type="resolution" value="1.42 A"/>
    <property type="chains" value="A=23-432"/>
</dbReference>
<dbReference type="PDB" id="7Z2Y">
    <property type="method" value="X-ray"/>
    <property type="resolution" value="1.86 A"/>
    <property type="chains" value="A=23-432"/>
</dbReference>
<dbReference type="PDB" id="7Z32">
    <property type="method" value="X-ray"/>
    <property type="resolution" value="1.85 A"/>
    <property type="chains" value="A=23-432"/>
</dbReference>
<dbReference type="PDB" id="7Z3V">
    <property type="method" value="X-ray"/>
    <property type="resolution" value="2.60 A"/>
    <property type="chains" value="A=23-432"/>
</dbReference>
<dbReference type="PDBsum" id="1DKL"/>
<dbReference type="PDBsum" id="1DKM"/>
<dbReference type="PDBsum" id="1DKN"/>
<dbReference type="PDBsum" id="1DKO"/>
<dbReference type="PDBsum" id="1DKP"/>
<dbReference type="PDBsum" id="1DKQ"/>
<dbReference type="PDBsum" id="4TSR"/>
<dbReference type="PDBsum" id="7Z1J"/>
<dbReference type="PDBsum" id="7Z2S"/>
<dbReference type="PDBsum" id="7Z2T"/>
<dbReference type="PDBsum" id="7Z2W"/>
<dbReference type="PDBsum" id="7Z2Y"/>
<dbReference type="PDBsum" id="7Z32"/>
<dbReference type="PDBsum" id="7Z3V"/>
<dbReference type="SMR" id="P07102"/>
<dbReference type="BioGRID" id="4259354">
    <property type="interactions" value="25"/>
</dbReference>
<dbReference type="FunCoup" id="P07102">
    <property type="interactions" value="36"/>
</dbReference>
<dbReference type="IntAct" id="P07102">
    <property type="interactions" value="3"/>
</dbReference>
<dbReference type="STRING" id="511145.b0980"/>
<dbReference type="jPOST" id="P07102"/>
<dbReference type="PaxDb" id="511145-b0980"/>
<dbReference type="EnsemblBacteria" id="AAC74065">
    <property type="protein sequence ID" value="AAC74065"/>
    <property type="gene ID" value="b0980"/>
</dbReference>
<dbReference type="GeneID" id="93776432"/>
<dbReference type="GeneID" id="946206"/>
<dbReference type="KEGG" id="ecj:JW0963"/>
<dbReference type="KEGG" id="eco:b0980"/>
<dbReference type="KEGG" id="ecoc:C3026_05980"/>
<dbReference type="PATRIC" id="fig|1411691.4.peg.1293"/>
<dbReference type="EchoBASE" id="EB0047"/>
<dbReference type="eggNOG" id="ENOG502Z7K9">
    <property type="taxonomic scope" value="Bacteria"/>
</dbReference>
<dbReference type="HOGENOM" id="CLU_030561_3_0_6"/>
<dbReference type="InParanoid" id="P07102"/>
<dbReference type="OMA" id="YVAHDTN"/>
<dbReference type="OrthoDB" id="395886at2"/>
<dbReference type="PhylomeDB" id="P07102"/>
<dbReference type="BioCyc" id="EcoCyc:APPA-MONOMER"/>
<dbReference type="BioCyc" id="MetaCyc:APPA-MONOMER"/>
<dbReference type="BRENDA" id="3.1.3.26">
    <property type="organism ID" value="2026"/>
</dbReference>
<dbReference type="EvolutionaryTrace" id="P07102"/>
<dbReference type="PRO" id="PR:P07102"/>
<dbReference type="Proteomes" id="UP000000625">
    <property type="component" value="Chromosome"/>
</dbReference>
<dbReference type="GO" id="GO:0030288">
    <property type="term" value="C:outer membrane-bounded periplasmic space"/>
    <property type="evidence" value="ECO:0000314"/>
    <property type="project" value="EcoCyc"/>
</dbReference>
<dbReference type="GO" id="GO:0008707">
    <property type="term" value="F:4-phytase activity"/>
    <property type="evidence" value="ECO:0007669"/>
    <property type="project" value="UniProtKB-EC"/>
</dbReference>
<dbReference type="GO" id="GO:0003993">
    <property type="term" value="F:acid phosphatase activity"/>
    <property type="evidence" value="ECO:0007669"/>
    <property type="project" value="UniProtKB-EC"/>
</dbReference>
<dbReference type="GO" id="GO:0003924">
    <property type="term" value="F:GTPase activity"/>
    <property type="evidence" value="ECO:0007669"/>
    <property type="project" value="RHEA"/>
</dbReference>
<dbReference type="GO" id="GO:0052745">
    <property type="term" value="F:inositol phosphate phosphatase activity"/>
    <property type="evidence" value="ECO:0000314"/>
    <property type="project" value="EcoCyc"/>
</dbReference>
<dbReference type="GO" id="GO:0008252">
    <property type="term" value="F:nucleotidase activity"/>
    <property type="evidence" value="ECO:0000314"/>
    <property type="project" value="EcoCyc"/>
</dbReference>
<dbReference type="GO" id="GO:0050308">
    <property type="term" value="F:sugar-phosphatase activity"/>
    <property type="evidence" value="ECO:0000314"/>
    <property type="project" value="EcoCyc"/>
</dbReference>
<dbReference type="GO" id="GO:0071454">
    <property type="term" value="P:cellular response to anoxia"/>
    <property type="evidence" value="ECO:0000314"/>
    <property type="project" value="EcoCyc"/>
</dbReference>
<dbReference type="GO" id="GO:0016036">
    <property type="term" value="P:cellular response to phosphate starvation"/>
    <property type="evidence" value="ECO:0000314"/>
    <property type="project" value="EcoCyc"/>
</dbReference>
<dbReference type="CDD" id="cd07061">
    <property type="entry name" value="HP_HAP_like"/>
    <property type="match status" value="1"/>
</dbReference>
<dbReference type="FunFam" id="3.40.50.1240:FF:000019">
    <property type="entry name" value="Periplasmic AppA protein"/>
    <property type="match status" value="1"/>
</dbReference>
<dbReference type="Gene3D" id="3.40.50.1240">
    <property type="entry name" value="Phosphoglycerate mutase-like"/>
    <property type="match status" value="2"/>
</dbReference>
<dbReference type="InterPro" id="IPR033379">
    <property type="entry name" value="Acid_Pase_AS"/>
</dbReference>
<dbReference type="InterPro" id="IPR000560">
    <property type="entry name" value="His_Pase_clade-2"/>
</dbReference>
<dbReference type="InterPro" id="IPR029033">
    <property type="entry name" value="His_PPase_superfam"/>
</dbReference>
<dbReference type="InterPro" id="IPR050645">
    <property type="entry name" value="Histidine_acid_phosphatase"/>
</dbReference>
<dbReference type="NCBIfam" id="NF007552">
    <property type="entry name" value="PRK10172.1"/>
    <property type="match status" value="1"/>
</dbReference>
<dbReference type="PANTHER" id="PTHR11567:SF110">
    <property type="entry name" value="2-PHOSPHOXYLOSE PHOSPHATASE 1"/>
    <property type="match status" value="1"/>
</dbReference>
<dbReference type="PANTHER" id="PTHR11567">
    <property type="entry name" value="ACID PHOSPHATASE-RELATED"/>
    <property type="match status" value="1"/>
</dbReference>
<dbReference type="Pfam" id="PF00328">
    <property type="entry name" value="His_Phos_2"/>
    <property type="match status" value="1"/>
</dbReference>
<dbReference type="SUPFAM" id="SSF53254">
    <property type="entry name" value="Phosphoglycerate mutase-like"/>
    <property type="match status" value="1"/>
</dbReference>
<dbReference type="PROSITE" id="PS00616">
    <property type="entry name" value="HIS_ACID_PHOSPHAT_1"/>
    <property type="match status" value="1"/>
</dbReference>
<dbReference type="PROSITE" id="PS00778">
    <property type="entry name" value="HIS_ACID_PHOSPHAT_2"/>
    <property type="match status" value="1"/>
</dbReference>
<reference key="1">
    <citation type="journal article" date="1990" name="J. Bacteriol.">
        <title>The complete nucleotide sequence of the Escherichia coli gene appA reveals significant homology between pH 2.5 acid phosphatase and glucose-1-phosphatase.</title>
        <authorList>
            <person name="Dassa J."/>
            <person name="Marck C."/>
            <person name="Boquet P.L."/>
        </authorList>
    </citation>
    <scope>NUCLEOTIDE SEQUENCE [GENOMIC DNA]</scope>
    <scope>PROTEIN SEQUENCE OF 23-29</scope>
    <source>
        <strain>K12</strain>
    </source>
</reference>
<reference key="2">
    <citation type="journal article" date="1996" name="DNA Res.">
        <title>A 718-kb DNA sequence of the Escherichia coli K-12 genome corresponding to the 12.7-28.0 min region on the linkage map.</title>
        <authorList>
            <person name="Oshima T."/>
            <person name="Aiba H."/>
            <person name="Baba T."/>
            <person name="Fujita K."/>
            <person name="Hayashi K."/>
            <person name="Honjo A."/>
            <person name="Ikemoto K."/>
            <person name="Inada T."/>
            <person name="Itoh T."/>
            <person name="Kajihara M."/>
            <person name="Kanai K."/>
            <person name="Kashimoto K."/>
            <person name="Kimura S."/>
            <person name="Kitagawa M."/>
            <person name="Makino K."/>
            <person name="Masuda S."/>
            <person name="Miki T."/>
            <person name="Mizobuchi K."/>
            <person name="Mori H."/>
            <person name="Motomura K."/>
            <person name="Nakamura Y."/>
            <person name="Nashimoto H."/>
            <person name="Nishio Y."/>
            <person name="Saito N."/>
            <person name="Sampei G."/>
            <person name="Seki Y."/>
            <person name="Tagami H."/>
            <person name="Takemoto K."/>
            <person name="Wada C."/>
            <person name="Yamamoto Y."/>
            <person name="Yano M."/>
            <person name="Horiuchi T."/>
        </authorList>
    </citation>
    <scope>NUCLEOTIDE SEQUENCE [LARGE SCALE GENOMIC DNA]</scope>
    <source>
        <strain>K12 / W3110 / ATCC 27325 / DSM 5911</strain>
    </source>
</reference>
<reference key="3">
    <citation type="journal article" date="1997" name="Science">
        <title>The complete genome sequence of Escherichia coli K-12.</title>
        <authorList>
            <person name="Blattner F.R."/>
            <person name="Plunkett G. III"/>
            <person name="Bloch C.A."/>
            <person name="Perna N.T."/>
            <person name="Burland V."/>
            <person name="Riley M."/>
            <person name="Collado-Vides J."/>
            <person name="Glasner J.D."/>
            <person name="Rode C.K."/>
            <person name="Mayhew G.F."/>
            <person name="Gregor J."/>
            <person name="Davis N.W."/>
            <person name="Kirkpatrick H.A."/>
            <person name="Goeden M.A."/>
            <person name="Rose D.J."/>
            <person name="Mau B."/>
            <person name="Shao Y."/>
        </authorList>
    </citation>
    <scope>NUCLEOTIDE SEQUENCE [LARGE SCALE GENOMIC DNA]</scope>
    <source>
        <strain>K12 / MG1655 / ATCC 47076</strain>
    </source>
</reference>
<reference key="4">
    <citation type="journal article" date="2006" name="Mol. Syst. Biol.">
        <title>Highly accurate genome sequences of Escherichia coli K-12 strains MG1655 and W3110.</title>
        <authorList>
            <person name="Hayashi K."/>
            <person name="Morooka N."/>
            <person name="Yamamoto Y."/>
            <person name="Fujita K."/>
            <person name="Isono K."/>
            <person name="Choi S."/>
            <person name="Ohtsubo E."/>
            <person name="Baba T."/>
            <person name="Wanner B.L."/>
            <person name="Mori H."/>
            <person name="Horiuchi T."/>
        </authorList>
    </citation>
    <scope>NUCLEOTIDE SEQUENCE [LARGE SCALE GENOMIC DNA]</scope>
    <source>
        <strain>K12 / W3110 / ATCC 27325 / DSM 5911</strain>
    </source>
</reference>
<reference key="5">
    <citation type="journal article" date="1987" name="Biochimie">
        <title>The structure of the promoter and amino terminal region of the pH 2.5 acid phosphatase structural gene (appA) of E. coli: a negative control of transcription mediated by cyclic AMP.</title>
        <authorList>
            <person name="Touati E."/>
            <person name="Danchin A."/>
        </authorList>
    </citation>
    <scope>NUCLEOTIDE SEQUENCE [GENOMIC DNA] OF 1-112</scope>
    <scope>TRANSCRIPTIONAL REGULATION BY CAMP</scope>
</reference>
<reference key="6">
    <citation type="journal article" date="1991" name="Mol. Gen. Genet.">
        <title>A new oxygen-regulated operon in Escherichia coli comprises the genes for a putative third cytochrome oxidase and for pH 2.5 acid phosphatase (appA).</title>
        <authorList>
            <person name="Dassa J."/>
            <person name="Fsihi H."/>
            <person name="Marck C."/>
            <person name="Dion M."/>
            <person name="Kieffer-Bontemps M."/>
            <person name="Boquet P.L."/>
        </authorList>
    </citation>
    <scope>NUCLEOTIDE SEQUENCE [GENOMIC DNA] OF 1-17</scope>
    <source>
        <strain>K12</strain>
    </source>
</reference>
<reference key="7">
    <citation type="journal article" date="1993" name="Arch. Biochem. Biophys.">
        <title>Purification and characterization of two phytases from Escherichia coli.</title>
        <authorList>
            <person name="Greiner R."/>
            <person name="Konietzny U."/>
            <person name="Jany K.-D."/>
        </authorList>
    </citation>
    <scope>PROTEIN SEQUENCE OF 23-35</scope>
    <scope>FUNCTION AS A PHYTASE</scope>
    <scope>CATALYTIC ACTIVITY</scope>
    <scope>ACTIVITY REGULATION</scope>
    <scope>BIOPHYSICOCHEMICAL PROPERTIES</scope>
    <scope>SUBUNIT</scope>
    <scope>SUBCELLULAR LOCATION</scope>
    <scope>INDUCTION</scope>
    <source>
        <strain>K12</strain>
    </source>
</reference>
<reference key="8">
    <citation type="journal article" date="1991" name="Biol. Chem. Hoppe-Seyler">
        <title>Characterization of a phytase from Escherichia coli.</title>
        <authorList>
            <person name="Greiner R."/>
            <person name="Jany K.-D."/>
        </authorList>
    </citation>
    <scope>PROTEIN SEQUENCE OF 23-33</scope>
    <scope>FUNCTION AS A PHYTASE</scope>
    <scope>CATALYTIC ACTIVITY</scope>
    <scope>BIOPHYSICOCHEMICAL PROPERTIES</scope>
    <scope>SUBUNIT</scope>
</reference>
<reference key="9">
    <citation type="journal article" date="1982" name="J. Biol. Chem.">
        <title>The acid phosphatase with optimum pH of 2.5 of Escherichia coli. Physiological and Biochemical study.</title>
        <authorList>
            <person name="Dassa E."/>
            <person name="Cahu M."/>
            <person name="Desjoyaux-Cherel B."/>
            <person name="Boquet P.L."/>
        </authorList>
    </citation>
    <scope>FUNCTION AS A PHOSPHATASE</scope>
    <scope>CATALYTIC ACTIVITY</scope>
    <scope>ACTIVITY REGULATION</scope>
    <scope>BIOPHYSICOCHEMICAL PROPERTIES</scope>
    <scope>SUBUNIT</scope>
    <scope>INDUCTION</scope>
    <source>
        <strain>K12</strain>
    </source>
</reference>
<reference key="10">
    <citation type="journal article" date="1992" name="J. Biol. Chem.">
        <title>Overexpression, site-directed mutagenesis, and mechanism of Escherichia coli acid phosphatase.</title>
        <authorList>
            <person name="Ostanin K."/>
            <person name="Harms E.H."/>
            <person name="Stevis P.E."/>
            <person name="Kuciel R."/>
            <person name="Zhou M.-M."/>
            <person name="van Etten R.L."/>
        </authorList>
    </citation>
    <scope>FUNCTION</scope>
    <scope>BIOPHYSICOCHEMICAL PROPERTIES</scope>
    <scope>SUBCELLULAR LOCATION</scope>
    <scope>MUTAGENESIS OF ARG-38; HIS-39; ARG-42; ARG-85; ARG-114 AND HIS-325</scope>
    <scope>ACTIVE SITE</scope>
</reference>
<reference key="11">
    <citation type="journal article" date="1993" name="J. Biol. Chem.">
        <title>Asp304 of Escherichia coli acid phosphatase is involved in leaving group protonation.</title>
        <authorList>
            <person name="Ostanin K."/>
            <person name="Van Etten R.L."/>
        </authorList>
    </citation>
    <scope>FUNCTION</scope>
    <scope>SUBCELLULAR LOCATION</scope>
    <scope>MUTAGENESIS OF ASP-326</scope>
    <scope>ACTIVE SITE</scope>
</reference>
<reference key="12">
    <citation type="journal article" date="1994" name="J. Bacteriol.">
        <title>Role of the transcriptional activator AppY in regulation of the cyx appA operon of Escherichia coli by anaerobiosis, phosphate starvation, and growth phase.</title>
        <authorList>
            <person name="Atlung T."/>
            <person name="Brondsted L."/>
        </authorList>
    </citation>
    <scope>INDUCTION</scope>
</reference>
<reference key="13">
    <citation type="journal article" date="2000" name="Can. J. Microbiol.">
        <title>Characterization and overproduction of the Escherichia coli appA encoded bifunctional enzyme that exhibits both phytase and acid phosphatase activities.</title>
        <authorList>
            <person name="Golovan S."/>
            <person name="Wang G."/>
            <person name="Zhang J."/>
            <person name="Forsberg C.W."/>
        </authorList>
    </citation>
    <scope>FUNCTION</scope>
    <scope>CATALYTIC ACTIVITY</scope>
    <scope>BIOPHYSICOCHEMICAL PROPERTIES</scope>
    <scope>SUBCELLULAR LOCATION</scope>
    <scope>BIOTECHNOLOGY</scope>
</reference>
<reference key="14">
    <citation type="journal article" date="2001" name="J. Biotechnol.">
        <title>Stereospecificity of myo-inositol hexakisphosphate dephosphorylation by a phytate-degrading enzyme of Escherichia coli.</title>
        <authorList>
            <person name="Greiner R."/>
            <person name="Carlsson N."/>
            <person name="Alminger M.L."/>
        </authorList>
    </citation>
    <scope>FUNCTION</scope>
    <scope>CATALYTIC ACTIVITY</scope>
    <scope>BIOPHYSICOCHEMICAL PROPERTIES</scope>
</reference>
<reference key="15">
    <citation type="journal article" date="2005" name="J. Biol. Chem.">
        <title>The nonconsecutive disulfide bond of Escherichia coli phytase (AppA) renders it dependent on the protein-disulfide isomerase, DsbC.</title>
        <authorList>
            <person name="Berkmen M."/>
            <person name="Boyd D."/>
            <person name="Beckwith J."/>
        </authorList>
    </citation>
    <scope>ACTIVITY REGULATION</scope>
    <scope>DISULFIDE BOND</scope>
    <scope>MUTAGENESIS OF CYS-99; CYS-130; CYS-155; CYS-200; CYS-210; CYS-404; CYS-413 AND CYS-430</scope>
</reference>
<reference key="16">
    <citation type="journal article" date="2019" name="Biosci. Biotechnol. Biochem.">
        <title>Mutational analysis of a catalytically important loop containing active site and substrate-binding site in Escherichia coli phytase AppA.</title>
        <authorList>
            <person name="Wada M."/>
            <person name="Hayashi Y."/>
            <person name="Arai M."/>
        </authorList>
    </citation>
    <scope>FUNCTION</scope>
    <scope>CATALYTIC ACTIVITY</scope>
    <scope>MUTAGENESIS OF ARG-38; HIS-39; GLY-40; VAL-41; ARG-42; ALA-43; PRO-44; THR-45; LYS-46; ALA-47 AND THR-48</scope>
</reference>
<reference evidence="26 27 28 29 30 31" key="17">
    <citation type="journal article" date="2000" name="Nat. Struct. Biol.">
        <title>Crystal structures of Escherichia coli phytase and its complex with phytate.</title>
        <authorList>
            <person name="Lim D."/>
            <person name="Golovan S."/>
            <person name="Forsberg C.W."/>
            <person name="Jia Z."/>
        </authorList>
    </citation>
    <scope>X-RAY CRYSTALLOGRAPHY (2.05 ANGSTROMS) OF APOENZYME AND IN COMPLEXES WITH PHYTATE</scope>
    <scope>SUBUNIT</scope>
    <scope>MUTAGENESIS OF HIS-39</scope>
    <scope>ACTIVE SITES</scope>
    <scope>DISULFIDE BOND</scope>
</reference>
<reference evidence="32" key="18">
    <citation type="submission" date="2014-06" db="PDB data bank">
        <title>The Complex Structure of mutant Phytase with IHS.</title>
        <authorList>
            <person name="Wu T.H."/>
            <person name="Chen C.C."/>
            <person name="Huang C.H."/>
            <person name="Guo R.T."/>
        </authorList>
    </citation>
    <scope>X-RAY CRYSTALLOGRAPHY (2.07 ANGSTROMS) OF 23-432 IN COMPLEX WITH D-MYO-INOSITOL-HEXASULPHATE</scope>
    <scope>DISULFIDE BOND</scope>
</reference>
<name>PPA_ECOLI</name>
<keyword id="KW-0002">3D-structure</keyword>
<keyword id="KW-0903">Direct protein sequencing</keyword>
<keyword id="KW-1015">Disulfide bond</keyword>
<keyword id="KW-0378">Hydrolase</keyword>
<keyword id="KW-0574">Periplasm</keyword>
<keyword id="KW-1185">Reference proteome</keyword>
<keyword id="KW-0732">Signal</keyword>
<comment type="function">
    <text evidence="2 3 4 8 9 11 12 14">Catalyzes the hydrolysis of phytate (or myo-inositol hexakisphosphate, an indigestible organic form of phosphorus that is found in many plant tissues) to myo-inositol and inorganic phosphate (PubMed:10696472, PubMed:11035187, PubMed:30712472, PubMed:8387749, Ref.8). Dephosphorylates phytate in a stereospecific way by sequential removal of phosphate groups to produce myo-inositol 2-monophosphate (PubMed:11035187). Also shows phosphoanhydride phosphatase activity and hydrolyzes the distal phosphoryl residues of GTP, the 5'-beta-phosphoryl residue of the regulatory nucleotide ppGpp and tripolyphosphates (PubMed:1429631, PubMed:6282821, PubMed:8407904). Does not split most phosphomonoesters with the exception of the synthetic substrate p-nitrophenyl phosphate (pNPP), 2,3-bisphosphoglycerate and fructose 1,6-bisphosphate (PubMed:10696472, PubMed:1429631, PubMed:6282821, PubMed:8387749, PubMed:8407904, Ref.8).</text>
</comment>
<comment type="catalytic activity">
    <reaction evidence="2 3 8 11 14">
        <text>1D-myo-inositol hexakisphosphate + H2O = 1D-myo-inositol 1,2,3,4,5-pentakisphosphate + phosphate</text>
        <dbReference type="Rhea" id="RHEA:68308"/>
        <dbReference type="ChEBI" id="CHEBI:15377"/>
        <dbReference type="ChEBI" id="CHEBI:43474"/>
        <dbReference type="ChEBI" id="CHEBI:58130"/>
        <dbReference type="ChEBI" id="CHEBI:177294"/>
    </reaction>
    <physiologicalReaction direction="left-to-right" evidence="2 3 8 11 14">
        <dbReference type="Rhea" id="RHEA:68309"/>
    </physiologicalReaction>
</comment>
<comment type="catalytic activity">
    <reaction evidence="3 11">
        <text>1D-myo-inositol 1,2,3,4,5-pentakisphosphate + H2O = 1D-myo-inositol 2,3,4,5-tetrakisphosphate + phosphate</text>
        <dbReference type="Rhea" id="RHEA:68312"/>
        <dbReference type="ChEBI" id="CHEBI:15377"/>
        <dbReference type="ChEBI" id="CHEBI:43474"/>
        <dbReference type="ChEBI" id="CHEBI:177294"/>
        <dbReference type="ChEBI" id="CHEBI:177295"/>
    </reaction>
    <physiologicalReaction direction="left-to-right" evidence="3 11">
        <dbReference type="Rhea" id="RHEA:68313"/>
    </physiologicalReaction>
</comment>
<comment type="catalytic activity">
    <reaction evidence="3 11">
        <text>1D-myo-inositol 2,3,4,5-tetrakisphosphate + H2O = 1D-myo-inositol 2,4,5-triphosphate + phosphate</text>
        <dbReference type="Rhea" id="RHEA:68316"/>
        <dbReference type="ChEBI" id="CHEBI:15377"/>
        <dbReference type="ChEBI" id="CHEBI:43474"/>
        <dbReference type="ChEBI" id="CHEBI:177295"/>
        <dbReference type="ChEBI" id="CHEBI:177296"/>
    </reaction>
    <physiologicalReaction direction="left-to-right" evidence="3 11">
        <dbReference type="Rhea" id="RHEA:68317"/>
    </physiologicalReaction>
</comment>
<comment type="catalytic activity">
    <reaction evidence="3">
        <text>1D-myo-inositol 2,4,5-triphosphate + H2O = 1D-myo-inositol 2,5-bisphosphate + phosphate</text>
        <dbReference type="Rhea" id="RHEA:68320"/>
        <dbReference type="ChEBI" id="CHEBI:15377"/>
        <dbReference type="ChEBI" id="CHEBI:43474"/>
        <dbReference type="ChEBI" id="CHEBI:177296"/>
        <dbReference type="ChEBI" id="CHEBI:177297"/>
    </reaction>
    <physiologicalReaction direction="left-to-right" evidence="3">
        <dbReference type="Rhea" id="RHEA:68321"/>
    </physiologicalReaction>
</comment>
<comment type="catalytic activity">
    <reaction evidence="3">
        <text>1D-myo-inositol 2,5-bisphosphate + H2O = 1D-myo-inositol 2-phosphate + phosphate</text>
        <dbReference type="Rhea" id="RHEA:68324"/>
        <dbReference type="ChEBI" id="CHEBI:15377"/>
        <dbReference type="ChEBI" id="CHEBI:43474"/>
        <dbReference type="ChEBI" id="CHEBI:84142"/>
        <dbReference type="ChEBI" id="CHEBI:177297"/>
    </reaction>
    <physiologicalReaction direction="left-to-right" evidence="3">
        <dbReference type="Rhea" id="RHEA:68325"/>
    </physiologicalReaction>
</comment>
<comment type="catalytic activity">
    <reaction evidence="9">
        <text>GTP + H2O = GDP + phosphate + H(+)</text>
        <dbReference type="Rhea" id="RHEA:19669"/>
        <dbReference type="ChEBI" id="CHEBI:15377"/>
        <dbReference type="ChEBI" id="CHEBI:15378"/>
        <dbReference type="ChEBI" id="CHEBI:37565"/>
        <dbReference type="ChEBI" id="CHEBI:43474"/>
        <dbReference type="ChEBI" id="CHEBI:58189"/>
    </reaction>
    <physiologicalReaction direction="left-to-right" evidence="9">
        <dbReference type="Rhea" id="RHEA:19670"/>
    </physiologicalReaction>
</comment>
<comment type="activity regulation">
    <text evidence="5 9 11">Contains three consecutive and one non-consecutive disulfide bonds and shows a strong dependence on DsbC for its full activity (PubMed:15642731). Competitively inhibited by tartaric acid and by sodium fluorid (PubMed:6282821, PubMed:8387749).</text>
</comment>
<comment type="biophysicochemical properties">
    <kinetics>
        <KM evidence="14">0.13 mM for phytate</KM>
        <KM evidence="2">0.63 mM for phytate</KM>
        <KM evidence="3">15 uM for D-Ins(1,2,3,4,5)P5</KM>
        <KM evidence="9">0.35 mM for GTP</KM>
        <KM evidence="9">1.8 mM for ppGpp</KM>
        <KM evidence="4">0.15 mM for tripolyphosphate</KM>
        <KM evidence="9">6.5 mM for GDP</KM>
        <KM evidence="9">20 mM for ATP</KM>
        <KM evidence="9">2.77 mM for pNPP</KM>
        <KM evidence="14">2.6 mM for pNPP</KM>
        <KM evidence="4">2.8 mM for pNPP</KM>
        <KM evidence="9">5 mM for 2,3-bisphosphoglycerate</KM>
        <KM evidence="9">5 mM for fructose 1,6-bisphosphate</KM>
        <KM evidence="4">3 mM for fructose 1,6-bisphosphate</KM>
        <Vmax evidence="2">2326.0 umol/min/mg enzyme with phytate as substrate</Vmax>
        <Vmax evidence="3">9235.0 umol/min/mg enzyme with D-Ins(1,2,3,4,5)P5 as substrate</Vmax>
        <Vmax evidence="9">22.0 nmol/min/mg enzyme with GTP as substrate</Vmax>
        <Vmax evidence="9">40.0 nmol/min/mg enzyme with ppGpp as substrate</Vmax>
        <Vmax evidence="4">440.0 umol/min/mg enzyme with tripolyphosphate as substrate</Vmax>
        <Vmax evidence="9">5.0 nmol/min/mg enzyme with GDP as substrate</Vmax>
        <Vmax evidence="9">62.0 nmol/min/mg enzyme with ATP as substrate</Vmax>
        <Vmax evidence="9">208.0 nmol/min/mg enzyme with pNPP as substrate</Vmax>
        <Vmax evidence="4">530.0 umol/min/mg enzyme with pNPP as substrate</Vmax>
        <Vmax evidence="9">625.0 nmol/min/mg enzyme with 2,3-bisphosphoglycerate as substrate</Vmax>
        <Vmax evidence="9">384.0 nmol/min/mg enzyme with fructose 1,6-bisphosphate as substrate</Vmax>
        <Vmax evidence="4">764.0 umol/min/mg enzyme with fructose 1,6-bisphosphate as substrate</Vmax>
    </kinetics>
    <phDependence>
        <text evidence="2 9 11">Optimum pH is 4.5 for phytase activity (PubMed:10696472, PubMed:8387749). Optimum pH is 2.5 for acid phosphatase activity (PubMed:6282821). Optimum pH is 2.5-3.0 for acid phosphatase activity (PubMed:10696472).</text>
    </phDependence>
    <temperatureDependence>
        <text evidence="2 11">Optimum temperature is 55 degrees Celsius for phytase activity (PubMed:8387749). Optimum temperature is 60 degrees Celsius for phytase activity (PubMed:10696472).</text>
    </temperatureDependence>
</comment>
<comment type="subunit">
    <text evidence="1 9 11 14">Monomer.</text>
</comment>
<comment type="subcellular location">
    <subcellularLocation>
        <location evidence="2 4 11 12">Periplasm</location>
    </subcellularLocation>
</comment>
<comment type="induction">
    <text evidence="7 9 10 11">Induced by phosphate starvation, anaerobiosis and entry into stationary phase (PubMed:6282821, PubMed:8071219, PubMed:8387749). Regulated by the HTH-type transcriptional regulator AppY (PubMed:8071219). Negatively controlled by the cAMP-cAMP receptor (CAP) complex (PubMed:3038201, PubMed:6282821).</text>
</comment>
<comment type="biotechnology">
    <text evidence="2">The properties of the phytase including the low pH optimum, protease resistance and high activity, demonstrate that the enzyme is a good candidate for industrial production as a feed enzyme and is therefore of potential commercial interest.</text>
</comment>
<comment type="similarity">
    <text evidence="21">Belongs to the histidine acid phosphatase family.</text>
</comment>
<gene>
    <name evidence="17" type="primary">appA</name>
    <name type="ordered locus">b0980</name>
    <name type="ordered locus">JW0963</name>
</gene>
<proteinExistence type="evidence at protein level"/>
<evidence type="ECO:0000269" key="1">
    <source>
    </source>
</evidence>
<evidence type="ECO:0000269" key="2">
    <source>
    </source>
</evidence>
<evidence type="ECO:0000269" key="3">
    <source>
    </source>
</evidence>
<evidence type="ECO:0000269" key="4">
    <source>
    </source>
</evidence>
<evidence type="ECO:0000269" key="5">
    <source>
    </source>
</evidence>
<evidence type="ECO:0000269" key="6">
    <source>
    </source>
</evidence>
<evidence type="ECO:0000269" key="7">
    <source>
    </source>
</evidence>
<evidence type="ECO:0000269" key="8">
    <source>
    </source>
</evidence>
<evidence type="ECO:0000269" key="9">
    <source>
    </source>
</evidence>
<evidence type="ECO:0000269" key="10">
    <source>
    </source>
</evidence>
<evidence type="ECO:0000269" key="11">
    <source>
    </source>
</evidence>
<evidence type="ECO:0000269" key="12">
    <source>
    </source>
</evidence>
<evidence type="ECO:0000269" key="13">
    <source ref="18"/>
</evidence>
<evidence type="ECO:0000269" key="14">
    <source ref="8"/>
</evidence>
<evidence type="ECO:0000303" key="15">
    <source>
    </source>
</evidence>
<evidence type="ECO:0000303" key="16">
    <source>
    </source>
</evidence>
<evidence type="ECO:0000303" key="17">
    <source>
    </source>
</evidence>
<evidence type="ECO:0000303" key="18">
    <source>
    </source>
</evidence>
<evidence type="ECO:0000303" key="19">
    <source>
    </source>
</evidence>
<evidence type="ECO:0000303" key="20">
    <source>
    </source>
</evidence>
<evidence type="ECO:0000305" key="21"/>
<evidence type="ECO:0000305" key="22">
    <source>
    </source>
</evidence>
<evidence type="ECO:0000305" key="23">
    <source>
    </source>
</evidence>
<evidence type="ECO:0000305" key="24">
    <source>
    </source>
</evidence>
<evidence type="ECO:0000305" key="25">
    <source ref="18"/>
</evidence>
<evidence type="ECO:0007744" key="26">
    <source>
        <dbReference type="PDB" id="1DKL"/>
    </source>
</evidence>
<evidence type="ECO:0007744" key="27">
    <source>
        <dbReference type="PDB" id="1DKM"/>
    </source>
</evidence>
<evidence type="ECO:0007744" key="28">
    <source>
        <dbReference type="PDB" id="1DKN"/>
    </source>
</evidence>
<evidence type="ECO:0007744" key="29">
    <source>
        <dbReference type="PDB" id="1DKO"/>
    </source>
</evidence>
<evidence type="ECO:0007744" key="30">
    <source>
        <dbReference type="PDB" id="1DKP"/>
    </source>
</evidence>
<evidence type="ECO:0007744" key="31">
    <source>
        <dbReference type="PDB" id="1DKQ"/>
    </source>
</evidence>
<evidence type="ECO:0007744" key="32">
    <source>
        <dbReference type="PDB" id="4TSR"/>
    </source>
</evidence>
<evidence type="ECO:0007829" key="33">
    <source>
        <dbReference type="PDB" id="1DKQ"/>
    </source>
</evidence>
<evidence type="ECO:0007829" key="34">
    <source>
        <dbReference type="PDB" id="7Z2T"/>
    </source>
</evidence>
<sequence>MKAILIPFLSLLIPLTPQSAFAQSEPELKLESVVIVSRHGVRAPTKATQLMQDVTPDAWPTWPVKLGWLTPRGGELIAYLGHYQRQRLVADGLLAKKGCPQSGQVAIIADVDERTRKTGEAFAAGLAPDCAITVHTQADTSSPDPLFNPLKTGVCQLDNANVTDAILSRAGGSIADFTGHRQTAFRELERVLNFPQSNLCLKREKQDESCSLTQALPSELKVSADNVSLTGAVSLASMLTEIFLLQQAQGMPEPGWGRITDSHQWNTLLSLHNAQFYLLQRTPEVARSRATPLLDLIKTALTPHPPQKQAYGVTLPTSVLFIAGHDTNLANLGGALELNWTLPGQPDNTPPGGELVFERWRRLSDNSQWIQVSLVFQTLQQMRDKTPLSLNTPPGEVKLTLAGCEERNAQGMCSLAGFTQIVNEARIPACSL</sequence>
<accession>P07102</accession>
<organism>
    <name type="scientific">Escherichia coli (strain K12)</name>
    <dbReference type="NCBI Taxonomy" id="83333"/>
    <lineage>
        <taxon>Bacteria</taxon>
        <taxon>Pseudomonadati</taxon>
        <taxon>Pseudomonadota</taxon>
        <taxon>Gammaproteobacteria</taxon>
        <taxon>Enterobacterales</taxon>
        <taxon>Enterobacteriaceae</taxon>
        <taxon>Escherichia</taxon>
    </lineage>
</organism>
<protein>
    <recommendedName>
        <fullName evidence="18">Phytase AppA</fullName>
        <ecNumber evidence="2 3 8 11 14">3.1.3.-</ecNumber>
    </recommendedName>
    <alternativeName>
        <fullName evidence="15 20">6-phytase</fullName>
    </alternativeName>
    <alternativeName>
        <fullName evidence="18">Histidine acid phosphatase phytase</fullName>
        <shortName evidence="18">HAP phytase</shortName>
    </alternativeName>
    <alternativeName>
        <fullName evidence="15">Myo-inositol hexakisphosphate phosphohydrolase</fullName>
    </alternativeName>
    <alternativeName>
        <fullName evidence="19">Phosphoanhydride phosphatase</fullName>
        <ecNumber evidence="4 9 12">3.6.1.-</ecNumber>
    </alternativeName>
    <alternativeName>
        <fullName evidence="19">pH 2.5 acid phosphatase</fullName>
        <shortName evidence="16 19">Acid phosphatase</shortName>
        <ecNumber evidence="2 4 9 11 12 14">3.1.3.-</ecNumber>
    </alternativeName>
</protein>
<feature type="signal peptide" evidence="6 11 14">
    <location>
        <begin position="1"/>
        <end position="22"/>
    </location>
</feature>
<feature type="chain" id="PRO_0000023947" description="Phytase AppA">
    <location>
        <begin position="23"/>
        <end position="432"/>
    </location>
</feature>
<feature type="active site" description="Nucleophile" evidence="22 23">
    <location>
        <position position="39"/>
    </location>
</feature>
<feature type="active site" description="Proton donor" evidence="22 24">
    <location>
        <position position="326"/>
    </location>
</feature>
<feature type="binding site" evidence="1 25 30 31">
    <location>
        <position position="38"/>
    </location>
    <ligand>
        <name>1D-myo-inositol hexakisphosphate</name>
        <dbReference type="ChEBI" id="CHEBI:58130"/>
    </ligand>
</feature>
<feature type="binding site" evidence="1 25 30 31">
    <location>
        <begin position="42"/>
        <end position="46"/>
    </location>
    <ligand>
        <name>1D-myo-inositol hexakisphosphate</name>
        <dbReference type="ChEBI" id="CHEBI:58130"/>
    </ligand>
</feature>
<feature type="binding site" evidence="1 25 30 31">
    <location>
        <position position="114"/>
    </location>
    <ligand>
        <name>1D-myo-inositol hexakisphosphate</name>
        <dbReference type="ChEBI" id="CHEBI:58130"/>
    </ligand>
</feature>
<feature type="binding site" evidence="1 30 31">
    <location>
        <position position="289"/>
    </location>
    <ligand>
        <name>1D-myo-inositol hexakisphosphate</name>
        <dbReference type="ChEBI" id="CHEBI:58130"/>
    </ligand>
</feature>
<feature type="binding site" evidence="1 25 30 31">
    <location>
        <begin position="325"/>
        <end position="327"/>
    </location>
    <ligand>
        <name>1D-myo-inositol hexakisphosphate</name>
        <dbReference type="ChEBI" id="CHEBI:58130"/>
    </ligand>
</feature>
<feature type="disulfide bond" evidence="1 5 13">
    <location>
        <begin position="99"/>
        <end position="130"/>
    </location>
</feature>
<feature type="disulfide bond" evidence="1 5 13">
    <location>
        <begin position="155"/>
        <end position="430"/>
    </location>
</feature>
<feature type="disulfide bond" evidence="1 5">
    <location>
        <begin position="200"/>
        <end position="210"/>
    </location>
</feature>
<feature type="disulfide bond" evidence="1 5 13">
    <location>
        <begin position="404"/>
        <end position="413"/>
    </location>
</feature>
<feature type="mutagenesis site" description="Loss of activity with pNPP and phytate as substrates." evidence="4 8">
    <original>R</original>
    <variation>A</variation>
    <location>
        <position position="38"/>
    </location>
</feature>
<feature type="mutagenesis site" description="Loss of activity with phytate as substrate." evidence="8">
    <original>R</original>
    <variation>G</variation>
    <location>
        <position position="38"/>
    </location>
</feature>
<feature type="mutagenesis site" description="Loss of activity with phytate as substrate." evidence="1 8">
    <original>H</original>
    <variation>A</variation>
    <variation>G</variation>
    <location>
        <position position="39"/>
    </location>
</feature>
<feature type="mutagenesis site" description="Loss of activity with pNPP as substrate." evidence="4">
    <original>H</original>
    <variation>N</variation>
    <location>
        <position position="39"/>
    </location>
</feature>
<feature type="mutagenesis site" description="Retains 50% of wild-type activity with phytate as substrate." evidence="8">
    <original>G</original>
    <variation>A</variation>
    <location>
        <position position="40"/>
    </location>
</feature>
<feature type="mutagenesis site" description="Retains 70% of wild-type activity with phytate as substrate." evidence="8">
    <original>V</original>
    <variation>A</variation>
    <location>
        <position position="41"/>
    </location>
</feature>
<feature type="mutagenesis site" description="Retains less than 10% of wild-type activity with phytate as substrate." evidence="8">
    <original>V</original>
    <variation>G</variation>
    <location>
        <position position="41"/>
    </location>
</feature>
<feature type="mutagenesis site" description="Shows residual activity with pNPP as substrate. Loss of activity with phytate as substrate." evidence="4 8">
    <original>R</original>
    <variation>A</variation>
    <location>
        <position position="42"/>
    </location>
</feature>
<feature type="mutagenesis site" description="Loss of activity with phytate as substrate." evidence="8">
    <original>R</original>
    <variation>G</variation>
    <location>
        <position position="42"/>
    </location>
</feature>
<feature type="mutagenesis site" description="Retains 70% of wild-type activity with phytate as substrate." evidence="8">
    <original>A</original>
    <variation>G</variation>
    <location>
        <position position="43"/>
    </location>
</feature>
<feature type="mutagenesis site" description="Retains 70% of wild-type activity with phytate as substrate." evidence="8">
    <original>P</original>
    <variation>A</variation>
    <location>
        <position position="44"/>
    </location>
</feature>
<feature type="mutagenesis site" description="Retains 50% of wild-type activity with phytate as substrate." evidence="8">
    <original>P</original>
    <variation>G</variation>
    <location>
        <position position="44"/>
    </location>
</feature>
<feature type="mutagenesis site" description="Retains 20% of wild-type activity with phytate as substrate." evidence="8">
    <original>T</original>
    <variation>A</variation>
    <location>
        <position position="45"/>
    </location>
</feature>
<feature type="mutagenesis site" description="Retains less than 10% of wild-type activity with phytate as substrate." evidence="8">
    <original>T</original>
    <variation>G</variation>
    <location>
        <position position="45"/>
    </location>
</feature>
<feature type="mutagenesis site" description="Retains 40% of wild-type activity with phytate as substrate." evidence="8">
    <original>K</original>
    <variation>A</variation>
    <variation>G</variation>
    <location>
        <position position="46"/>
    </location>
</feature>
<feature type="mutagenesis site" description="Retains 80% of wild-type activity with phytate as substrate." evidence="8">
    <original>A</original>
    <variation>G</variation>
    <location>
        <position position="47"/>
    </location>
</feature>
<feature type="mutagenesis site" description="Retains 80% of wild-type activity with phytate as substrate." evidence="8">
    <original>T</original>
    <variation>A</variation>
    <location>
        <position position="48"/>
    </location>
</feature>
<feature type="mutagenesis site" description="Retains 90% of wild-type activity with phytate as substrate." evidence="8">
    <original>T</original>
    <variation>G</variation>
    <location>
        <position position="48"/>
    </location>
</feature>
<feature type="mutagenesis site" description="Does not affect activity with pNPP as substrate." evidence="4">
    <original>R</original>
    <variation>A</variation>
    <location>
        <position position="85"/>
    </location>
</feature>
<feature type="mutagenesis site" description="Retains less than 10% of wild-type activity." evidence="5">
    <original>C</original>
    <variation>S</variation>
    <location>
        <position position="99"/>
    </location>
</feature>
<feature type="mutagenesis site" description="Shows residual activity with pNPP as substrate." evidence="4">
    <original>R</original>
    <variation>A</variation>
    <location>
        <position position="114"/>
    </location>
</feature>
<feature type="mutagenesis site" description="Retains less than 10% of wild-type activity." evidence="5">
    <original>C</original>
    <variation>S</variation>
    <location>
        <position position="130"/>
    </location>
</feature>
<feature type="mutagenesis site" description="Retains less than 10% of wild-type activity. Does not require DsbC for its remaining activity; when associated with S-430." evidence="5">
    <original>C</original>
    <variation>S</variation>
    <location>
        <position position="155"/>
    </location>
</feature>
<feature type="mutagenesis site" description="Retains 70% of wild-type activity." evidence="5">
    <original>C</original>
    <variation>S</variation>
    <location>
        <position position="200"/>
    </location>
</feature>
<feature type="mutagenesis site" description="Retains 35% of wild-type activity." evidence="5">
    <original>C</original>
    <variation>S</variation>
    <location>
        <position position="210"/>
    </location>
</feature>
<feature type="mutagenesis site" description="Shows residual activity with pNPP as substrate." evidence="4">
    <original>H</original>
    <variation>A</variation>
    <location>
        <position position="325"/>
    </location>
</feature>
<feature type="mutagenesis site" description="28-fold decrease in Vmax with pNPP as substrate. 1600-fold decrease in Vmax with fructose 1,6-bisphosphate as substrate. Does not affect the Km values of the substrates pNPP, fructose 1,6-diphosphate and tripolyphosphate." evidence="12">
    <original>D</original>
    <variation>A</variation>
    <location>
        <position position="326"/>
    </location>
</feature>
<feature type="mutagenesis site" description="40-fold decrease in Vmax with pNPP as substrate. 460-fold decrease in Vmax with fructose 1,6-bisphosphate as substrate. Does not affect the Km values of the substrates pNPP, fructose 1,6-diphosphate and tripolyphosphate." evidence="12">
    <original>D</original>
    <variation>E</variation>
    <location>
        <position position="326"/>
    </location>
</feature>
<feature type="mutagenesis site" description="Retains less than 10% of wild-type activity." evidence="5">
    <original>C</original>
    <variation>S</variation>
    <location>
        <position position="404"/>
    </location>
</feature>
<feature type="mutagenesis site" description="Retains less than 10% of wild-type activity." evidence="5">
    <original>C</original>
    <variation>S</variation>
    <location>
        <position position="413"/>
    </location>
</feature>
<feature type="mutagenesis site" description="Retains less than 10% of wild-type activity. Does not require DsbC for its remaining activity; when associated with S-155." evidence="5">
    <original>C</original>
    <variation>S</variation>
    <location>
        <position position="430"/>
    </location>
</feature>
<feature type="sequence conflict" description="In Ref. 5; CAA29031." evidence="21" ref="5">
    <original>MQDVTPDAWPTWPVKL</original>
    <variation>NAGCHPRRMANLAGKT</variation>
    <location>
        <begin position="51"/>
        <end position="66"/>
    </location>
</feature>
<feature type="sequence conflict" description="In Ref. 5; CAA29031." evidence="21" ref="5">
    <original>EL</original>
    <variation>DV</variation>
    <location>
        <begin position="75"/>
        <end position="76"/>
    </location>
</feature>
<feature type="sequence conflict" description="In Ref. 5; CAA29031." evidence="21" ref="5">
    <original>D</original>
    <variation>S</variation>
    <location>
        <position position="112"/>
    </location>
</feature>
<feature type="strand" evidence="34">
    <location>
        <begin position="28"/>
        <end position="38"/>
    </location>
</feature>
<feature type="helix" evidence="34">
    <location>
        <begin position="49"/>
        <end position="53"/>
    </location>
</feature>
<feature type="strand" evidence="34">
    <location>
        <begin position="63"/>
        <end position="65"/>
    </location>
</feature>
<feature type="helix" evidence="34">
    <location>
        <begin position="71"/>
        <end position="90"/>
    </location>
</feature>
<feature type="strand" evidence="34">
    <location>
        <begin position="96"/>
        <end position="98"/>
    </location>
</feature>
<feature type="strand" evidence="34">
    <location>
        <begin position="104"/>
        <end position="109"/>
    </location>
</feature>
<feature type="helix" evidence="34">
    <location>
        <begin position="113"/>
        <end position="126"/>
    </location>
</feature>
<feature type="helix" evidence="34">
    <location>
        <begin position="145"/>
        <end position="147"/>
    </location>
</feature>
<feature type="helix" evidence="34">
    <location>
        <begin position="149"/>
        <end position="152"/>
    </location>
</feature>
<feature type="helix" evidence="34">
    <location>
        <begin position="159"/>
        <end position="169"/>
    </location>
</feature>
<feature type="turn" evidence="33">
    <location>
        <begin position="170"/>
        <end position="172"/>
    </location>
</feature>
<feature type="helix" evidence="34">
    <location>
        <begin position="174"/>
        <end position="179"/>
    </location>
</feature>
<feature type="helix" evidence="34">
    <location>
        <begin position="182"/>
        <end position="192"/>
    </location>
</feature>
<feature type="helix" evidence="34">
    <location>
        <begin position="194"/>
        <end position="196"/>
    </location>
</feature>
<feature type="helix" evidence="34">
    <location>
        <begin position="198"/>
        <end position="205"/>
    </location>
</feature>
<feature type="helix" evidence="34">
    <location>
        <begin position="212"/>
        <end position="215"/>
    </location>
</feature>
<feature type="strand" evidence="34">
    <location>
        <begin position="220"/>
        <end position="223"/>
    </location>
</feature>
<feature type="strand" evidence="34">
    <location>
        <begin position="226"/>
        <end position="229"/>
    </location>
</feature>
<feature type="helix" evidence="34">
    <location>
        <begin position="231"/>
        <end position="248"/>
    </location>
</feature>
<feature type="helix" evidence="34">
    <location>
        <begin position="254"/>
        <end position="257"/>
    </location>
</feature>
<feature type="helix" evidence="34">
    <location>
        <begin position="262"/>
        <end position="279"/>
    </location>
</feature>
<feature type="helix" evidence="34">
    <location>
        <begin position="283"/>
        <end position="301"/>
    </location>
</feature>
<feature type="helix" evidence="34">
    <location>
        <begin position="310"/>
        <end position="312"/>
    </location>
</feature>
<feature type="strand" evidence="34">
    <location>
        <begin position="314"/>
        <end position="316"/>
    </location>
</feature>
<feature type="strand" evidence="34">
    <location>
        <begin position="318"/>
        <end position="324"/>
    </location>
</feature>
<feature type="helix" evidence="34">
    <location>
        <begin position="326"/>
        <end position="336"/>
    </location>
</feature>
<feature type="strand" evidence="33">
    <location>
        <begin position="345"/>
        <end position="349"/>
    </location>
</feature>
<feature type="strand" evidence="34">
    <location>
        <begin position="354"/>
        <end position="362"/>
    </location>
</feature>
<feature type="turn" evidence="34">
    <location>
        <begin position="363"/>
        <end position="366"/>
    </location>
</feature>
<feature type="strand" evidence="34">
    <location>
        <begin position="367"/>
        <end position="376"/>
    </location>
</feature>
<feature type="helix" evidence="34">
    <location>
        <begin position="379"/>
        <end position="383"/>
    </location>
</feature>
<feature type="strand" evidence="34">
    <location>
        <begin position="390"/>
        <end position="392"/>
    </location>
</feature>
<feature type="strand" evidence="34">
    <location>
        <begin position="395"/>
        <end position="398"/>
    </location>
</feature>
<feature type="strand" evidence="34">
    <location>
        <begin position="405"/>
        <end position="407"/>
    </location>
</feature>
<feature type="helix" evidence="34">
    <location>
        <begin position="415"/>
        <end position="425"/>
    </location>
</feature>
<feature type="helix" evidence="34">
    <location>
        <begin position="428"/>
        <end position="430"/>
    </location>
</feature>